<comment type="function">
    <text evidence="1">Aspartyl-tRNA synthetase with relaxed tRNA specificity since it is able to aspartylate not only its cognate tRNA(Asp) but also tRNA(Asn). Reaction proceeds in two steps: L-aspartate is first activated by ATP to form Asp-AMP and then transferred to the acceptor end of tRNA(Asp/Asn).</text>
</comment>
<comment type="catalytic activity">
    <reaction evidence="1">
        <text>tRNA(Asx) + L-aspartate + ATP = L-aspartyl-tRNA(Asx) + AMP + diphosphate</text>
        <dbReference type="Rhea" id="RHEA:18349"/>
        <dbReference type="Rhea" id="RHEA-COMP:9710"/>
        <dbReference type="Rhea" id="RHEA-COMP:9711"/>
        <dbReference type="ChEBI" id="CHEBI:29991"/>
        <dbReference type="ChEBI" id="CHEBI:30616"/>
        <dbReference type="ChEBI" id="CHEBI:33019"/>
        <dbReference type="ChEBI" id="CHEBI:78442"/>
        <dbReference type="ChEBI" id="CHEBI:78516"/>
        <dbReference type="ChEBI" id="CHEBI:456215"/>
        <dbReference type="EC" id="6.1.1.23"/>
    </reaction>
</comment>
<comment type="subunit">
    <text evidence="1">Homodimer.</text>
</comment>
<comment type="subcellular location">
    <subcellularLocation>
        <location evidence="1">Cytoplasm</location>
    </subcellularLocation>
</comment>
<comment type="similarity">
    <text evidence="1">Belongs to the class-II aminoacyl-tRNA synthetase family. Type 1 subfamily.</text>
</comment>
<feature type="chain" id="PRO_0000110964" description="Aspartate--tRNA(Asp/Asn) ligase">
    <location>
        <begin position="1"/>
        <end position="605"/>
    </location>
</feature>
<feature type="region of interest" description="Aspartate" evidence="1">
    <location>
        <begin position="202"/>
        <end position="205"/>
    </location>
</feature>
<feature type="region of interest" description="Disordered" evidence="2">
    <location>
        <begin position="580"/>
        <end position="605"/>
    </location>
</feature>
<feature type="binding site" evidence="1">
    <location>
        <position position="178"/>
    </location>
    <ligand>
        <name>L-aspartate</name>
        <dbReference type="ChEBI" id="CHEBI:29991"/>
    </ligand>
</feature>
<feature type="binding site" evidence="1">
    <location>
        <begin position="224"/>
        <end position="226"/>
    </location>
    <ligand>
        <name>ATP</name>
        <dbReference type="ChEBI" id="CHEBI:30616"/>
    </ligand>
</feature>
<feature type="binding site" evidence="1">
    <location>
        <position position="224"/>
    </location>
    <ligand>
        <name>L-aspartate</name>
        <dbReference type="ChEBI" id="CHEBI:29991"/>
    </ligand>
</feature>
<feature type="binding site" evidence="1">
    <location>
        <position position="233"/>
    </location>
    <ligand>
        <name>ATP</name>
        <dbReference type="ChEBI" id="CHEBI:30616"/>
    </ligand>
</feature>
<feature type="binding site" evidence="1">
    <location>
        <position position="458"/>
    </location>
    <ligand>
        <name>L-aspartate</name>
        <dbReference type="ChEBI" id="CHEBI:29991"/>
    </ligand>
</feature>
<feature type="binding site" evidence="1">
    <location>
        <position position="488"/>
    </location>
    <ligand>
        <name>ATP</name>
        <dbReference type="ChEBI" id="CHEBI:30616"/>
    </ligand>
</feature>
<feature type="binding site" evidence="1">
    <location>
        <position position="495"/>
    </location>
    <ligand>
        <name>L-aspartate</name>
        <dbReference type="ChEBI" id="CHEBI:29991"/>
    </ligand>
</feature>
<feature type="binding site" evidence="1">
    <location>
        <begin position="540"/>
        <end position="543"/>
    </location>
    <ligand>
        <name>ATP</name>
        <dbReference type="ChEBI" id="CHEBI:30616"/>
    </ligand>
</feature>
<feature type="site" description="Important for tRNA non-discrimination" evidence="1">
    <location>
        <position position="30"/>
    </location>
</feature>
<accession>Q8DJS8</accession>
<reference key="1">
    <citation type="journal article" date="2002" name="DNA Res.">
        <title>Complete genome structure of the thermophilic cyanobacterium Thermosynechococcus elongatus BP-1.</title>
        <authorList>
            <person name="Nakamura Y."/>
            <person name="Kaneko T."/>
            <person name="Sato S."/>
            <person name="Ikeuchi M."/>
            <person name="Katoh H."/>
            <person name="Sasamoto S."/>
            <person name="Watanabe A."/>
            <person name="Iriguchi M."/>
            <person name="Kawashima K."/>
            <person name="Kimura T."/>
            <person name="Kishida Y."/>
            <person name="Kiyokawa C."/>
            <person name="Kohara M."/>
            <person name="Matsumoto M."/>
            <person name="Matsuno A."/>
            <person name="Nakazaki N."/>
            <person name="Shimpo S."/>
            <person name="Sugimoto M."/>
            <person name="Takeuchi C."/>
            <person name="Yamada M."/>
            <person name="Tabata S."/>
        </authorList>
    </citation>
    <scope>NUCLEOTIDE SEQUENCE [LARGE SCALE GENOMIC DNA]</scope>
    <source>
        <strain>NIES-2133 / IAM M-273 / BP-1</strain>
    </source>
</reference>
<gene>
    <name evidence="1" type="primary">aspS</name>
    <name type="ordered locus">tll1144</name>
</gene>
<keyword id="KW-0030">Aminoacyl-tRNA synthetase</keyword>
<keyword id="KW-0067">ATP-binding</keyword>
<keyword id="KW-0963">Cytoplasm</keyword>
<keyword id="KW-0436">Ligase</keyword>
<keyword id="KW-0547">Nucleotide-binding</keyword>
<keyword id="KW-0648">Protein biosynthesis</keyword>
<keyword id="KW-1185">Reference proteome</keyword>
<proteinExistence type="inferred from homology"/>
<evidence type="ECO:0000255" key="1">
    <source>
        <dbReference type="HAMAP-Rule" id="MF_00044"/>
    </source>
</evidence>
<evidence type="ECO:0000256" key="2">
    <source>
        <dbReference type="SAM" id="MobiDB-lite"/>
    </source>
</evidence>
<organism>
    <name type="scientific">Thermosynechococcus vestitus (strain NIES-2133 / IAM M-273 / BP-1)</name>
    <dbReference type="NCBI Taxonomy" id="197221"/>
    <lineage>
        <taxon>Bacteria</taxon>
        <taxon>Bacillati</taxon>
        <taxon>Cyanobacteriota</taxon>
        <taxon>Cyanophyceae</taxon>
        <taxon>Acaryochloridales</taxon>
        <taxon>Thermosynechococcaceae</taxon>
        <taxon>Thermosynechococcus</taxon>
    </lineage>
</organism>
<dbReference type="EC" id="6.1.1.23" evidence="1"/>
<dbReference type="EMBL" id="BA000039">
    <property type="protein sequence ID" value="BAC08696.1"/>
    <property type="molecule type" value="Genomic_DNA"/>
</dbReference>
<dbReference type="RefSeq" id="NP_681934.1">
    <property type="nucleotide sequence ID" value="NC_004113.1"/>
</dbReference>
<dbReference type="RefSeq" id="WP_011056986.1">
    <property type="nucleotide sequence ID" value="NC_004113.1"/>
</dbReference>
<dbReference type="SMR" id="Q8DJS8"/>
<dbReference type="STRING" id="197221.gene:10747739"/>
<dbReference type="EnsemblBacteria" id="BAC08696">
    <property type="protein sequence ID" value="BAC08696"/>
    <property type="gene ID" value="BAC08696"/>
</dbReference>
<dbReference type="KEGG" id="tel:tll1144"/>
<dbReference type="PATRIC" id="fig|197221.4.peg.1200"/>
<dbReference type="eggNOG" id="COG0173">
    <property type="taxonomic scope" value="Bacteria"/>
</dbReference>
<dbReference type="Proteomes" id="UP000000440">
    <property type="component" value="Chromosome"/>
</dbReference>
<dbReference type="GO" id="GO:0005737">
    <property type="term" value="C:cytoplasm"/>
    <property type="evidence" value="ECO:0007669"/>
    <property type="project" value="UniProtKB-SubCell"/>
</dbReference>
<dbReference type="GO" id="GO:0004815">
    <property type="term" value="F:aspartate-tRNA ligase activity"/>
    <property type="evidence" value="ECO:0007669"/>
    <property type="project" value="UniProtKB-UniRule"/>
</dbReference>
<dbReference type="GO" id="GO:0050560">
    <property type="term" value="F:aspartate-tRNA(Asn) ligase activity"/>
    <property type="evidence" value="ECO:0007669"/>
    <property type="project" value="UniProtKB-EC"/>
</dbReference>
<dbReference type="GO" id="GO:0005524">
    <property type="term" value="F:ATP binding"/>
    <property type="evidence" value="ECO:0007669"/>
    <property type="project" value="UniProtKB-UniRule"/>
</dbReference>
<dbReference type="GO" id="GO:0003676">
    <property type="term" value="F:nucleic acid binding"/>
    <property type="evidence" value="ECO:0007669"/>
    <property type="project" value="InterPro"/>
</dbReference>
<dbReference type="GO" id="GO:0006422">
    <property type="term" value="P:aspartyl-tRNA aminoacylation"/>
    <property type="evidence" value="ECO:0007669"/>
    <property type="project" value="UniProtKB-UniRule"/>
</dbReference>
<dbReference type="CDD" id="cd00777">
    <property type="entry name" value="AspRS_core"/>
    <property type="match status" value="1"/>
</dbReference>
<dbReference type="CDD" id="cd04317">
    <property type="entry name" value="EcAspRS_like_N"/>
    <property type="match status" value="1"/>
</dbReference>
<dbReference type="Gene3D" id="3.30.930.10">
    <property type="entry name" value="Bira Bifunctional Protein, Domain 2"/>
    <property type="match status" value="1"/>
</dbReference>
<dbReference type="Gene3D" id="3.30.1360.30">
    <property type="entry name" value="GAD-like domain"/>
    <property type="match status" value="1"/>
</dbReference>
<dbReference type="Gene3D" id="2.40.50.140">
    <property type="entry name" value="Nucleic acid-binding proteins"/>
    <property type="match status" value="1"/>
</dbReference>
<dbReference type="HAMAP" id="MF_00044">
    <property type="entry name" value="Asp_tRNA_synth_type1"/>
    <property type="match status" value="1"/>
</dbReference>
<dbReference type="InterPro" id="IPR004364">
    <property type="entry name" value="Aa-tRNA-synt_II"/>
</dbReference>
<dbReference type="InterPro" id="IPR006195">
    <property type="entry name" value="aa-tRNA-synth_II"/>
</dbReference>
<dbReference type="InterPro" id="IPR045864">
    <property type="entry name" value="aa-tRNA-synth_II/BPL/LPL"/>
</dbReference>
<dbReference type="InterPro" id="IPR004524">
    <property type="entry name" value="Asp-tRNA-ligase_1"/>
</dbReference>
<dbReference type="InterPro" id="IPR047089">
    <property type="entry name" value="Asp-tRNA-ligase_1_N"/>
</dbReference>
<dbReference type="InterPro" id="IPR002312">
    <property type="entry name" value="Asp/Asn-tRNA-synth_IIb"/>
</dbReference>
<dbReference type="InterPro" id="IPR047090">
    <property type="entry name" value="AspRS_core"/>
</dbReference>
<dbReference type="InterPro" id="IPR004115">
    <property type="entry name" value="GAD-like_sf"/>
</dbReference>
<dbReference type="InterPro" id="IPR029351">
    <property type="entry name" value="GAD_dom"/>
</dbReference>
<dbReference type="InterPro" id="IPR012340">
    <property type="entry name" value="NA-bd_OB-fold"/>
</dbReference>
<dbReference type="InterPro" id="IPR004365">
    <property type="entry name" value="NA-bd_OB_tRNA"/>
</dbReference>
<dbReference type="NCBIfam" id="TIGR00459">
    <property type="entry name" value="aspS_bact"/>
    <property type="match status" value="1"/>
</dbReference>
<dbReference type="NCBIfam" id="NF001750">
    <property type="entry name" value="PRK00476.1"/>
    <property type="match status" value="1"/>
</dbReference>
<dbReference type="PANTHER" id="PTHR22594:SF5">
    <property type="entry name" value="ASPARTATE--TRNA LIGASE, MITOCHONDRIAL"/>
    <property type="match status" value="1"/>
</dbReference>
<dbReference type="PANTHER" id="PTHR22594">
    <property type="entry name" value="ASPARTYL/LYSYL-TRNA SYNTHETASE"/>
    <property type="match status" value="1"/>
</dbReference>
<dbReference type="Pfam" id="PF02938">
    <property type="entry name" value="GAD"/>
    <property type="match status" value="1"/>
</dbReference>
<dbReference type="Pfam" id="PF00152">
    <property type="entry name" value="tRNA-synt_2"/>
    <property type="match status" value="1"/>
</dbReference>
<dbReference type="Pfam" id="PF01336">
    <property type="entry name" value="tRNA_anti-codon"/>
    <property type="match status" value="1"/>
</dbReference>
<dbReference type="PRINTS" id="PR01042">
    <property type="entry name" value="TRNASYNTHASP"/>
</dbReference>
<dbReference type="SUPFAM" id="SSF55681">
    <property type="entry name" value="Class II aaRS and biotin synthetases"/>
    <property type="match status" value="1"/>
</dbReference>
<dbReference type="SUPFAM" id="SSF55261">
    <property type="entry name" value="GAD domain-like"/>
    <property type="match status" value="1"/>
</dbReference>
<dbReference type="SUPFAM" id="SSF50249">
    <property type="entry name" value="Nucleic acid-binding proteins"/>
    <property type="match status" value="1"/>
</dbReference>
<dbReference type="PROSITE" id="PS50862">
    <property type="entry name" value="AA_TRNA_LIGASE_II"/>
    <property type="match status" value="1"/>
</dbReference>
<protein>
    <recommendedName>
        <fullName evidence="1">Aspartate--tRNA(Asp/Asn) ligase</fullName>
        <ecNumber evidence="1">6.1.1.23</ecNumber>
    </recommendedName>
    <alternativeName>
        <fullName evidence="1">Aspartyl-tRNA synthetase</fullName>
        <shortName evidence="1">AspRS</shortName>
    </alternativeName>
    <alternativeName>
        <fullName evidence="1">Non-discriminating aspartyl-tRNA synthetase</fullName>
        <shortName evidence="1">ND-AspRS</shortName>
    </alternativeName>
</protein>
<name>SYDND_THEVB</name>
<sequence length="605" mass="68202">MRTHYCGDVRLRDVGTTVTLYGWVDRRRDHGGVIFIDLRDRSGIVQIVSDPQRTPDAYPQAERLRSEYVVKVVGRVSKRPADSVNPKLATGDIEIYADGIEVLNTVRQQLPFAISSTENEEVREEVRLRYRYLDLRRERMARNLRLRHRVVQAMRRFLEDEAGFIEVETPILTRSTPEGARDYLVPSRVNPGEWFALPQSPQLFKQLLMVAGCDRYYQIAHCFRDEDLRADRQPEFTQLDMEMSFMDQEEILDLNEALICHIFKTVKGIELPRPFPRLSYQEAMDRYGTDKPDTRYGLELVDVSDILKDSGFKVFSGAIAQGGVVKILPIPNGSDRISNVRIKPGGDLFQEATTAGAKGLAYIRVRNNGEIDTIGAIKDNLSPEQKALLLERTGAQPGHLLLFGAGETATVNKTLDRLRQTIAREFNLIDPTATHLLWVVDFPMFEWNAEEKRLEALHHPFTAPHPEDLGDLKTARAQAYDLIFNGHEVGGGSLRIHQPELQRQVFEIIGIDEATAQEKFGFLLEAFEFGTPPHGGIAYGLDRLVMLLAGADSIRDTIAFPKTQQARCLLTGAPSSVEPQQLKELHVTPAKPAKTTAKTKPRPAD</sequence>